<feature type="chain" id="PRO_0000460974" description="Chitin synthase csmB">
    <location>
        <begin position="1"/>
        <end position="1760"/>
    </location>
</feature>
<feature type="transmembrane region" description="Helical" evidence="2">
    <location>
        <begin position="731"/>
        <end position="751"/>
    </location>
</feature>
<feature type="transmembrane region" description="Helical" evidence="2">
    <location>
        <begin position="767"/>
        <end position="787"/>
    </location>
</feature>
<feature type="transmembrane region" description="Helical" evidence="2">
    <location>
        <begin position="1029"/>
        <end position="1049"/>
    </location>
</feature>
<feature type="transmembrane region" description="Helical" evidence="2">
    <location>
        <begin position="1419"/>
        <end position="1439"/>
    </location>
</feature>
<feature type="transmembrane region" description="Helical" evidence="2">
    <location>
        <begin position="1452"/>
        <end position="1472"/>
    </location>
</feature>
<feature type="transmembrane region" description="Helical" evidence="2">
    <location>
        <begin position="1480"/>
        <end position="1500"/>
    </location>
</feature>
<feature type="domain" description="Myosin motor" evidence="4">
    <location>
        <begin position="1"/>
        <end position="374"/>
    </location>
</feature>
<feature type="domain" description="DEK-C" evidence="5">
    <location>
        <begin position="1702"/>
        <end position="1758"/>
    </location>
</feature>
<feature type="region of interest" description="Disordered" evidence="6">
    <location>
        <begin position="1"/>
        <end position="23"/>
    </location>
</feature>
<feature type="region of interest" description="Disordered" evidence="6">
    <location>
        <begin position="344"/>
        <end position="363"/>
    </location>
</feature>
<feature type="region of interest" description="Actin-binding" evidence="4">
    <location>
        <position position="374"/>
    </location>
</feature>
<feature type="compositionally biased region" description="Low complexity" evidence="6">
    <location>
        <begin position="1"/>
        <end position="17"/>
    </location>
</feature>
<feature type="glycosylation site" description="N-linked (GlcNAc...) asparagine" evidence="3">
    <location>
        <position position="275"/>
    </location>
</feature>
<feature type="glycosylation site" description="N-linked (GlcNAc...) asparagine" evidence="3">
    <location>
        <position position="878"/>
    </location>
</feature>
<feature type="glycosylation site" description="N-linked (GlcNAc...) asparagine" evidence="3">
    <location>
        <position position="906"/>
    </location>
</feature>
<feature type="glycosylation site" description="N-linked (GlcNAc...) asparagine" evidence="3">
    <location>
        <position position="995"/>
    </location>
</feature>
<feature type="glycosylation site" description="N-linked (GlcNAc...) asparagine" evidence="3">
    <location>
        <position position="1394"/>
    </location>
</feature>
<feature type="glycosylation site" description="N-linked (GlcNAc...) asparagine" evidence="3">
    <location>
        <position position="1584"/>
    </location>
</feature>
<feature type="glycosylation site" description="N-linked (GlcNAc...) asparagine" evidence="3">
    <location>
        <position position="1652"/>
    </location>
</feature>
<comment type="function">
    <text evidence="7 10">Polymerizes chitin, a structural polymer of the cell wall and septum, by transferring the sugar moiety of UDP-GlcNAc to the non-reducing end of the growing chitin polymer (Probable). Plays an important role in septal growth or maintenance (PubMed:38468360). Mediates colony spore formation (PubMed:38468360).</text>
</comment>
<comment type="catalytic activity">
    <reaction evidence="10">
        <text>[(1-&gt;4)-N-acetyl-beta-D-glucosaminyl](n) + UDP-N-acetyl-alpha-D-glucosamine = [(1-&gt;4)-N-acetyl-beta-D-glucosaminyl](n+1) + UDP + H(+)</text>
        <dbReference type="Rhea" id="RHEA:16637"/>
        <dbReference type="Rhea" id="RHEA-COMP:9593"/>
        <dbReference type="Rhea" id="RHEA-COMP:9595"/>
        <dbReference type="ChEBI" id="CHEBI:15378"/>
        <dbReference type="ChEBI" id="CHEBI:17029"/>
        <dbReference type="ChEBI" id="CHEBI:57705"/>
        <dbReference type="ChEBI" id="CHEBI:58223"/>
        <dbReference type="EC" id="2.4.1.16"/>
    </reaction>
    <physiologicalReaction direction="left-to-right" evidence="10">
        <dbReference type="Rhea" id="RHEA:16638"/>
    </physiologicalReaction>
</comment>
<comment type="subcellular location">
    <subcellularLocation>
        <location evidence="1">Cell membrane</location>
        <topology evidence="2">Multi-pass membrane protein</topology>
    </subcellularLocation>
    <subcellularLocation>
        <location evidence="1">Cell septum</location>
    </subcellularLocation>
    <subcellularLocation>
        <location evidence="1">Cell tip</location>
    </subcellularLocation>
    <text evidence="1">Concentrates at the hyphal tips and septation sites near actin structures, which is dependent on the actin-binding ability of the N-terminal myosin motor-like domain (MMD).</text>
</comment>
<comment type="domain">
    <text evidence="1">The N-terminal myosin motor-like domain (MMD) does not seem to have motor activity but is indispensable for polarized cell wall synthesis via binding to actin that ensures the proper localization to the hyphal tips and septation sites near actin structures.</text>
</comment>
<comment type="disruption phenotype">
    <text evidence="7">Reduces drastically spore production.</text>
</comment>
<comment type="similarity">
    <text evidence="9">In the N-terminal section; belongs to the TRAFAC class myosin-kinesin ATPase superfamily. Myosin family.</text>
</comment>
<comment type="similarity">
    <text evidence="9">In the C-terminal section; belongs to the chitin synthase family. Class V subfamily.</text>
</comment>
<protein>
    <recommendedName>
        <fullName evidence="8">Chitin synthase csmB</fullName>
        <ecNumber evidence="10">2.4.1.16</ecNumber>
    </recommendedName>
    <alternativeName>
        <fullName evidence="9">Chitin-UDP acetyl-glucosaminyl transferase csmB</fullName>
    </alternativeName>
    <alternativeName>
        <fullName evidence="8">Class-V chitin synthase csmB</fullName>
    </alternativeName>
</protein>
<dbReference type="EC" id="2.4.1.16" evidence="10"/>
<dbReference type="EMBL" id="AM269999">
    <property type="protein sequence ID" value="CAK96408.1"/>
    <property type="molecule type" value="Genomic_DNA"/>
</dbReference>
<dbReference type="RefSeq" id="XP_001399375.1">
    <property type="nucleotide sequence ID" value="XM_001399338.2"/>
</dbReference>
<dbReference type="CAZy" id="GT2">
    <property type="family name" value="Glycosyltransferase Family 2"/>
</dbReference>
<dbReference type="EnsemblFungi" id="CAK96408">
    <property type="protein sequence ID" value="CAK96408"/>
    <property type="gene ID" value="An02g02340"/>
</dbReference>
<dbReference type="GeneID" id="4978720"/>
<dbReference type="KEGG" id="ang:An02g02340"/>
<dbReference type="VEuPathDB" id="FungiDB:An02g02340"/>
<dbReference type="HOGENOM" id="CLU_000192_0_0_1"/>
<dbReference type="Proteomes" id="UP000006706">
    <property type="component" value="Chromosome 4R"/>
</dbReference>
<dbReference type="GO" id="GO:0030428">
    <property type="term" value="C:cell septum"/>
    <property type="evidence" value="ECO:0007669"/>
    <property type="project" value="UniProtKB-SubCell"/>
</dbReference>
<dbReference type="GO" id="GO:0051286">
    <property type="term" value="C:cell tip"/>
    <property type="evidence" value="ECO:0007669"/>
    <property type="project" value="UniProtKB-SubCell"/>
</dbReference>
<dbReference type="GO" id="GO:0016459">
    <property type="term" value="C:myosin complex"/>
    <property type="evidence" value="ECO:0007669"/>
    <property type="project" value="UniProtKB-KW"/>
</dbReference>
<dbReference type="GO" id="GO:0005886">
    <property type="term" value="C:plasma membrane"/>
    <property type="evidence" value="ECO:0007669"/>
    <property type="project" value="UniProtKB-SubCell"/>
</dbReference>
<dbReference type="GO" id="GO:0003779">
    <property type="term" value="F:actin binding"/>
    <property type="evidence" value="ECO:0007669"/>
    <property type="project" value="UniProtKB-KW"/>
</dbReference>
<dbReference type="GO" id="GO:0005524">
    <property type="term" value="F:ATP binding"/>
    <property type="evidence" value="ECO:0007669"/>
    <property type="project" value="InterPro"/>
</dbReference>
<dbReference type="GO" id="GO:0004100">
    <property type="term" value="F:chitin synthase activity"/>
    <property type="evidence" value="ECO:0007669"/>
    <property type="project" value="UniProtKB-EC"/>
</dbReference>
<dbReference type="GO" id="GO:0003774">
    <property type="term" value="F:cytoskeletal motor activity"/>
    <property type="evidence" value="ECO:0007669"/>
    <property type="project" value="InterPro"/>
</dbReference>
<dbReference type="GO" id="GO:0006031">
    <property type="term" value="P:chitin biosynthetic process"/>
    <property type="evidence" value="ECO:0007669"/>
    <property type="project" value="TreeGrafter"/>
</dbReference>
<dbReference type="GO" id="GO:0031505">
    <property type="term" value="P:fungal-type cell wall organization"/>
    <property type="evidence" value="ECO:0007669"/>
    <property type="project" value="TreeGrafter"/>
</dbReference>
<dbReference type="CDD" id="cd04190">
    <property type="entry name" value="Chitin_synth_C"/>
    <property type="match status" value="1"/>
</dbReference>
<dbReference type="FunFam" id="1.10.10.820:FF:000010">
    <property type="entry name" value="Chitin synthase 6"/>
    <property type="match status" value="1"/>
</dbReference>
<dbReference type="Gene3D" id="1.10.10.820">
    <property type="match status" value="1"/>
</dbReference>
<dbReference type="Gene3D" id="3.10.120.10">
    <property type="entry name" value="Cytochrome b5-like heme/steroid binding domain"/>
    <property type="match status" value="2"/>
</dbReference>
<dbReference type="Gene3D" id="1.10.10.60">
    <property type="entry name" value="Homeodomain-like"/>
    <property type="match status" value="1"/>
</dbReference>
<dbReference type="Gene3D" id="3.40.850.10">
    <property type="entry name" value="Kinesin motor domain"/>
    <property type="match status" value="1"/>
</dbReference>
<dbReference type="Gene3D" id="1.20.120.720">
    <property type="entry name" value="Myosin VI head, motor domain, U50 subdomain"/>
    <property type="match status" value="1"/>
</dbReference>
<dbReference type="InterPro" id="IPR004835">
    <property type="entry name" value="Chitin_synth"/>
</dbReference>
<dbReference type="InterPro" id="IPR001199">
    <property type="entry name" value="Cyt_B5-like_heme/steroid-bd"/>
</dbReference>
<dbReference type="InterPro" id="IPR036400">
    <property type="entry name" value="Cyt_B5-like_heme/steroid_sf"/>
</dbReference>
<dbReference type="InterPro" id="IPR014876">
    <property type="entry name" value="DEK_C"/>
</dbReference>
<dbReference type="InterPro" id="IPR036961">
    <property type="entry name" value="Kinesin_motor_dom_sf"/>
</dbReference>
<dbReference type="InterPro" id="IPR001609">
    <property type="entry name" value="Myosin_head_motor_dom-like"/>
</dbReference>
<dbReference type="InterPro" id="IPR029044">
    <property type="entry name" value="Nucleotide-diphossugar_trans"/>
</dbReference>
<dbReference type="InterPro" id="IPR027417">
    <property type="entry name" value="P-loop_NTPase"/>
</dbReference>
<dbReference type="PANTHER" id="PTHR22914">
    <property type="entry name" value="CHITIN SYNTHASE"/>
    <property type="match status" value="1"/>
</dbReference>
<dbReference type="PANTHER" id="PTHR22914:SF13">
    <property type="entry name" value="CHITIN SYNTHASE"/>
    <property type="match status" value="1"/>
</dbReference>
<dbReference type="Pfam" id="PF03142">
    <property type="entry name" value="Chitin_synth_2"/>
    <property type="match status" value="1"/>
</dbReference>
<dbReference type="Pfam" id="PF00173">
    <property type="entry name" value="Cyt-b5"/>
    <property type="match status" value="1"/>
</dbReference>
<dbReference type="Pfam" id="PF08766">
    <property type="entry name" value="DEK_C"/>
    <property type="match status" value="1"/>
</dbReference>
<dbReference type="Pfam" id="PF00063">
    <property type="entry name" value="Myosin_head"/>
    <property type="match status" value="1"/>
</dbReference>
<dbReference type="SMART" id="SM01117">
    <property type="entry name" value="Cyt-b5"/>
    <property type="match status" value="2"/>
</dbReference>
<dbReference type="SMART" id="SM00242">
    <property type="entry name" value="MYSc"/>
    <property type="match status" value="1"/>
</dbReference>
<dbReference type="SUPFAM" id="SSF55856">
    <property type="entry name" value="Cytochrome b5-like heme/steroid binding domain"/>
    <property type="match status" value="2"/>
</dbReference>
<dbReference type="SUPFAM" id="SSF109715">
    <property type="entry name" value="DEK C-terminal domain"/>
    <property type="match status" value="1"/>
</dbReference>
<dbReference type="SUPFAM" id="SSF53448">
    <property type="entry name" value="Nucleotide-diphospho-sugar transferases"/>
    <property type="match status" value="1"/>
</dbReference>
<dbReference type="SUPFAM" id="SSF52540">
    <property type="entry name" value="P-loop containing nucleoside triphosphate hydrolases"/>
    <property type="match status" value="1"/>
</dbReference>
<dbReference type="PROSITE" id="PS51998">
    <property type="entry name" value="DEK_C"/>
    <property type="match status" value="1"/>
</dbReference>
<dbReference type="PROSITE" id="PS51456">
    <property type="entry name" value="MYOSIN_MOTOR"/>
    <property type="match status" value="1"/>
</dbReference>
<proteinExistence type="inferred from homology"/>
<accession>A2QC55</accession>
<reference key="1">
    <citation type="journal article" date="2007" name="Nat. Biotechnol.">
        <title>Genome sequencing and analysis of the versatile cell factory Aspergillus niger CBS 513.88.</title>
        <authorList>
            <person name="Pel H.J."/>
            <person name="de Winde J.H."/>
            <person name="Archer D.B."/>
            <person name="Dyer P.S."/>
            <person name="Hofmann G."/>
            <person name="Schaap P.J."/>
            <person name="Turner G."/>
            <person name="de Vries R.P."/>
            <person name="Albang R."/>
            <person name="Albermann K."/>
            <person name="Andersen M.R."/>
            <person name="Bendtsen J.D."/>
            <person name="Benen J.A.E."/>
            <person name="van den Berg M."/>
            <person name="Breestraat S."/>
            <person name="Caddick M.X."/>
            <person name="Contreras R."/>
            <person name="Cornell M."/>
            <person name="Coutinho P.M."/>
            <person name="Danchin E.G.J."/>
            <person name="Debets A.J.M."/>
            <person name="Dekker P."/>
            <person name="van Dijck P.W.M."/>
            <person name="van Dijk A."/>
            <person name="Dijkhuizen L."/>
            <person name="Driessen A.J.M."/>
            <person name="d'Enfert C."/>
            <person name="Geysens S."/>
            <person name="Goosen C."/>
            <person name="Groot G.S.P."/>
            <person name="de Groot P.W.J."/>
            <person name="Guillemette T."/>
            <person name="Henrissat B."/>
            <person name="Herweijer M."/>
            <person name="van den Hombergh J.P.T.W."/>
            <person name="van den Hondel C.A.M.J.J."/>
            <person name="van der Heijden R.T.J.M."/>
            <person name="van der Kaaij R.M."/>
            <person name="Klis F.M."/>
            <person name="Kools H.J."/>
            <person name="Kubicek C.P."/>
            <person name="van Kuyk P.A."/>
            <person name="Lauber J."/>
            <person name="Lu X."/>
            <person name="van der Maarel M.J.E.C."/>
            <person name="Meulenberg R."/>
            <person name="Menke H."/>
            <person name="Mortimer M.A."/>
            <person name="Nielsen J."/>
            <person name="Oliver S.G."/>
            <person name="Olsthoorn M."/>
            <person name="Pal K."/>
            <person name="van Peij N.N.M.E."/>
            <person name="Ram A.F.J."/>
            <person name="Rinas U."/>
            <person name="Roubos J.A."/>
            <person name="Sagt C.M.J."/>
            <person name="Schmoll M."/>
            <person name="Sun J."/>
            <person name="Ussery D."/>
            <person name="Varga J."/>
            <person name="Vervecken W."/>
            <person name="van de Vondervoort P.J.J."/>
            <person name="Wedler H."/>
            <person name="Woesten H.A.B."/>
            <person name="Zeng A.-P."/>
            <person name="van Ooyen A.J.J."/>
            <person name="Visser J."/>
            <person name="Stam H."/>
        </authorList>
    </citation>
    <scope>NUCLEOTIDE SEQUENCE [LARGE SCALE GENOMIC DNA]</scope>
    <source>
        <strain>ATCC MYA-4892 / CBS 513.88 / FGSC A1513</strain>
    </source>
</reference>
<reference key="2">
    <citation type="journal article" date="2024" name="Fungal Biol. Biotechnol.">
        <title>Breaking down barriers: comprehensive functional analysis of the Aspergillus niger chitin synthase repertoire.</title>
        <authorList>
            <person name="Barthel L."/>
            <person name="Cairns T."/>
            <person name="Duda S."/>
            <person name="Mueller H."/>
            <person name="Dobbert B."/>
            <person name="Jung S."/>
            <person name="Briesen H."/>
            <person name="Meyer V."/>
        </authorList>
    </citation>
    <scope>FUNCTION</scope>
    <scope>DISRUPTION PHENOTYPE</scope>
</reference>
<keyword id="KW-0009">Actin-binding</keyword>
<keyword id="KW-1003">Cell membrane</keyword>
<keyword id="KW-0325">Glycoprotein</keyword>
<keyword id="KW-0328">Glycosyltransferase</keyword>
<keyword id="KW-0472">Membrane</keyword>
<keyword id="KW-0505">Motor protein</keyword>
<keyword id="KW-0518">Myosin</keyword>
<keyword id="KW-1185">Reference proteome</keyword>
<keyword id="KW-0808">Transferase</keyword>
<keyword id="KW-0812">Transmembrane</keyword>
<keyword id="KW-1133">Transmembrane helix</keyword>
<name>CSMB_ASPNC</name>
<evidence type="ECO:0000250" key="1">
    <source>
        <dbReference type="UniProtKB" id="G5EB74"/>
    </source>
</evidence>
<evidence type="ECO:0000255" key="2"/>
<evidence type="ECO:0000255" key="3">
    <source>
        <dbReference type="PROSITE-ProRule" id="PRU00498"/>
    </source>
</evidence>
<evidence type="ECO:0000255" key="4">
    <source>
        <dbReference type="PROSITE-ProRule" id="PRU00782"/>
    </source>
</evidence>
<evidence type="ECO:0000255" key="5">
    <source>
        <dbReference type="PROSITE-ProRule" id="PRU01342"/>
    </source>
</evidence>
<evidence type="ECO:0000256" key="6">
    <source>
        <dbReference type="SAM" id="MobiDB-lite"/>
    </source>
</evidence>
<evidence type="ECO:0000269" key="7">
    <source>
    </source>
</evidence>
<evidence type="ECO:0000303" key="8">
    <source>
    </source>
</evidence>
<evidence type="ECO:0000305" key="9"/>
<evidence type="ECO:0000305" key="10">
    <source>
    </source>
</evidence>
<sequence length="1760" mass="196314">MSNRFSVYSSHSTGVSSARPSAPSTVTTTTLLNALHAYYNSGQPYQLDAGTSLVVNTWVTATRANANGQEGGTIDRDLALRAWEHARRRAEDGCIVLCSTHQSTPSIFEPFLTALPLTTPNIAFTALTALRPFLSAVTSFNPSYSLYSALSARYSINLKGDVVGLSLALSTSGINVRKGLLDIPTEAGYRAFDVFYYLLASISTPAEREFLNLKDASSYALLSKSGTYTPPAYLPAADDAAAAEDFRAALKSIGIKGAAQRGLLSTLAGLLKLGNATGFLVDQEDLEEACDEVGGLLGLDPEVLLHSCSTDDREVLISGIYEALVDWVIEKANEAISSELQAILDNDPSTSGGSGPGGQWTDDDTVSITVVDIPRPALGKAVAVRNVFDDNAGINAEMKEDGVTVPPVGHAIANDVSSAVAQVEADLGITTGSAWHEREYELGKRQEVLEKVGLEVDMDSFLRKLLLPVEAEGITVGKRGRFDLPTTLGSSRVWHHISVHPTDDLPETLSTFTPTAAWSAGVVSRQLREWRLAEWANRRLRQLDFTADFDMDEFVGRYYRLGCAEGRDGVESWLMERGWTNGDAFVGHQRIWMRESAWWEAETMLDMKPEEPATANPFLYGNTMLDAGMPHYAGTPMAESTSLLGSRDDLLNHRQSTLAPSFHGGAKSIAPSVPQTLNMGGDYGLGSKGDTRKWDNPYSDEYAHYNNGELDPEVGDPKHIEKKPITQGRRIWVGFVWALTFWIPSFALRWIGRMKRPDVRMAWREKLVLMLIILLFNGVVCFYIIAFGDLLCPNKDKAWNEKQLSWHALDNDFYVSIHGNVYDITKFWRLQHSDSSIETTTSNMKPFAGEILDQYFTPPLTRFCSPYVTEQSVTLQFNNTNALEYPNAEHYCGSYHTPSTTTKLHNITWYEDIFLPKIKTYYKGPLVWSKSTVQKQATDSSRYWVIVHDKIYDLTDYFYTAELFDNDDTYAFLPSSVTDLFKNYAGEDVTDKWQNTTDFQQSQTCLDYVFYKGKVDFRDSPRCTVNNWILLSFTVLICAVILVKFVSALQLGSKRRPAPQDKFVICHVPAYTEGEDALRKGLDSLTALQYDNKRKLIFVICDGMIVGGGNDRPTPKIVLDILGVDPKVDPPALPCMAIGQGSEQLNYGKVYSGLYEYEGNVVPYIVVVKVGKESEQSRPKPGNRGKRDSQIMMMRFLNRVHHRAPMSPLELEIFHQINNVIGVDPELYEYCLMVDADTSVREDSLNRLVAACANDARIAGICGETSLQNEERSWWTMIQVYEYYISHHLAKAFESLFGSVTCLPGCFCMYRLRTADKGKPLIISDKVIEEYADNDVDTLHKKNLLSLGEDRFLTTLMTKHFPEMSYKFIPDAYASTAAPETWSVLLSQRRRWINSTVHNLVEVAALKDMCGFCLFSMRFVVLVDLLGTVILPATCVYLGYLIYRVASHTGPFPMISIVILAGVYGLQAIIFLLKRQWQHIGWMIIYICAYPIYNFILPLYSFWKQDDFSWGSTRIVIGEQGNKRVVAVDDEGFDPRSVPLQRWDDYALANNLPGRRGDFGMSQEKMYGGRYDDMALEMDDMHSNYSSVKPASTILTGFPHHQGRHGSPYMPPQSPAPFANTPGNRNSHMSSLTRYTDQPFASGHMASRSLGNLSQVPDGMTNRHSVGLMQSTENLLGRPNSRSPVGGISRPVSAFDFRGSGGPDEGAITEAIRACLAEVDLDTVTKKQVRALVEQRLQTTLMGDKRTFLDRQIDHELANM</sequence>
<organism>
    <name type="scientific">Aspergillus niger (strain ATCC MYA-4892 / CBS 513.88 / FGSC A1513)</name>
    <dbReference type="NCBI Taxonomy" id="425011"/>
    <lineage>
        <taxon>Eukaryota</taxon>
        <taxon>Fungi</taxon>
        <taxon>Dikarya</taxon>
        <taxon>Ascomycota</taxon>
        <taxon>Pezizomycotina</taxon>
        <taxon>Eurotiomycetes</taxon>
        <taxon>Eurotiomycetidae</taxon>
        <taxon>Eurotiales</taxon>
        <taxon>Aspergillaceae</taxon>
        <taxon>Aspergillus</taxon>
        <taxon>Aspergillus subgen. Circumdati</taxon>
    </lineage>
</organism>
<gene>
    <name evidence="8" type="primary">csmB</name>
    <name type="ORF">An02g02340</name>
</gene>